<keyword id="KW-0678">Repressor</keyword>
<keyword id="KW-0687">Ribonucleoprotein</keyword>
<keyword id="KW-0689">Ribosomal protein</keyword>
<keyword id="KW-0694">RNA-binding</keyword>
<keyword id="KW-0699">rRNA-binding</keyword>
<keyword id="KW-0810">Translation regulation</keyword>
<keyword id="KW-0820">tRNA-binding</keyword>
<feature type="chain" id="PRO_1000141375" description="Large ribosomal subunit protein uL1">
    <location>
        <begin position="1"/>
        <end position="232"/>
    </location>
</feature>
<protein>
    <recommendedName>
        <fullName evidence="1">Large ribosomal subunit protein uL1</fullName>
    </recommendedName>
    <alternativeName>
        <fullName evidence="2">50S ribosomal protein L1</fullName>
    </alternativeName>
</protein>
<dbReference type="EMBL" id="CP001052">
    <property type="protein sequence ID" value="ACD18045.1"/>
    <property type="molecule type" value="Genomic_DNA"/>
</dbReference>
<dbReference type="RefSeq" id="WP_007180145.1">
    <property type="nucleotide sequence ID" value="NC_010681.1"/>
</dbReference>
<dbReference type="SMR" id="B2T762"/>
<dbReference type="STRING" id="398527.Bphyt_3655"/>
<dbReference type="GeneID" id="97311154"/>
<dbReference type="KEGG" id="bpy:Bphyt_3655"/>
<dbReference type="eggNOG" id="COG0081">
    <property type="taxonomic scope" value="Bacteria"/>
</dbReference>
<dbReference type="HOGENOM" id="CLU_062853_0_0_4"/>
<dbReference type="OrthoDB" id="9803740at2"/>
<dbReference type="Proteomes" id="UP000001739">
    <property type="component" value="Chromosome 1"/>
</dbReference>
<dbReference type="GO" id="GO:0022625">
    <property type="term" value="C:cytosolic large ribosomal subunit"/>
    <property type="evidence" value="ECO:0007669"/>
    <property type="project" value="TreeGrafter"/>
</dbReference>
<dbReference type="GO" id="GO:0019843">
    <property type="term" value="F:rRNA binding"/>
    <property type="evidence" value="ECO:0007669"/>
    <property type="project" value="UniProtKB-UniRule"/>
</dbReference>
<dbReference type="GO" id="GO:0003735">
    <property type="term" value="F:structural constituent of ribosome"/>
    <property type="evidence" value="ECO:0007669"/>
    <property type="project" value="InterPro"/>
</dbReference>
<dbReference type="GO" id="GO:0000049">
    <property type="term" value="F:tRNA binding"/>
    <property type="evidence" value="ECO:0007669"/>
    <property type="project" value="UniProtKB-KW"/>
</dbReference>
<dbReference type="GO" id="GO:0006417">
    <property type="term" value="P:regulation of translation"/>
    <property type="evidence" value="ECO:0007669"/>
    <property type="project" value="UniProtKB-KW"/>
</dbReference>
<dbReference type="GO" id="GO:0006412">
    <property type="term" value="P:translation"/>
    <property type="evidence" value="ECO:0007669"/>
    <property type="project" value="UniProtKB-UniRule"/>
</dbReference>
<dbReference type="CDD" id="cd00403">
    <property type="entry name" value="Ribosomal_L1"/>
    <property type="match status" value="1"/>
</dbReference>
<dbReference type="FunFam" id="3.40.50.790:FF:000001">
    <property type="entry name" value="50S ribosomal protein L1"/>
    <property type="match status" value="1"/>
</dbReference>
<dbReference type="Gene3D" id="3.30.190.20">
    <property type="match status" value="1"/>
</dbReference>
<dbReference type="Gene3D" id="3.40.50.790">
    <property type="match status" value="1"/>
</dbReference>
<dbReference type="HAMAP" id="MF_01318_B">
    <property type="entry name" value="Ribosomal_uL1_B"/>
    <property type="match status" value="1"/>
</dbReference>
<dbReference type="InterPro" id="IPR005878">
    <property type="entry name" value="Ribosom_uL1_bac-type"/>
</dbReference>
<dbReference type="InterPro" id="IPR002143">
    <property type="entry name" value="Ribosomal_uL1"/>
</dbReference>
<dbReference type="InterPro" id="IPR023674">
    <property type="entry name" value="Ribosomal_uL1-like"/>
</dbReference>
<dbReference type="InterPro" id="IPR028364">
    <property type="entry name" value="Ribosomal_uL1/biogenesis"/>
</dbReference>
<dbReference type="InterPro" id="IPR016095">
    <property type="entry name" value="Ribosomal_uL1_3-a/b-sand"/>
</dbReference>
<dbReference type="InterPro" id="IPR023673">
    <property type="entry name" value="Ribosomal_uL1_CS"/>
</dbReference>
<dbReference type="NCBIfam" id="TIGR01169">
    <property type="entry name" value="rplA_bact"/>
    <property type="match status" value="1"/>
</dbReference>
<dbReference type="PANTHER" id="PTHR36427">
    <property type="entry name" value="54S RIBOSOMAL PROTEIN L1, MITOCHONDRIAL"/>
    <property type="match status" value="1"/>
</dbReference>
<dbReference type="PANTHER" id="PTHR36427:SF3">
    <property type="entry name" value="LARGE RIBOSOMAL SUBUNIT PROTEIN UL1M"/>
    <property type="match status" value="1"/>
</dbReference>
<dbReference type="Pfam" id="PF00687">
    <property type="entry name" value="Ribosomal_L1"/>
    <property type="match status" value="1"/>
</dbReference>
<dbReference type="PIRSF" id="PIRSF002155">
    <property type="entry name" value="Ribosomal_L1"/>
    <property type="match status" value="1"/>
</dbReference>
<dbReference type="SUPFAM" id="SSF56808">
    <property type="entry name" value="Ribosomal protein L1"/>
    <property type="match status" value="1"/>
</dbReference>
<dbReference type="PROSITE" id="PS01199">
    <property type="entry name" value="RIBOSOMAL_L1"/>
    <property type="match status" value="1"/>
</dbReference>
<comment type="function">
    <text evidence="1">Binds directly to 23S rRNA. The L1 stalk is quite mobile in the ribosome, and is involved in E site tRNA release.</text>
</comment>
<comment type="function">
    <text evidence="1">Protein L1 is also a translational repressor protein, it controls the translation of the L11 operon by binding to its mRNA.</text>
</comment>
<comment type="subunit">
    <text evidence="1">Part of the 50S ribosomal subunit.</text>
</comment>
<comment type="similarity">
    <text evidence="1">Belongs to the universal ribosomal protein uL1 family.</text>
</comment>
<evidence type="ECO:0000255" key="1">
    <source>
        <dbReference type="HAMAP-Rule" id="MF_01318"/>
    </source>
</evidence>
<evidence type="ECO:0000305" key="2"/>
<gene>
    <name evidence="1" type="primary">rplA</name>
    <name type="ordered locus">Bphyt_3655</name>
</gene>
<proteinExistence type="inferred from homology"/>
<reference key="1">
    <citation type="journal article" date="2011" name="J. Bacteriol.">
        <title>Complete genome sequence of the plant growth-promoting endophyte Burkholderia phytofirmans strain PsJN.</title>
        <authorList>
            <person name="Weilharter A."/>
            <person name="Mitter B."/>
            <person name="Shin M.V."/>
            <person name="Chain P.S."/>
            <person name="Nowak J."/>
            <person name="Sessitsch A."/>
        </authorList>
    </citation>
    <scope>NUCLEOTIDE SEQUENCE [LARGE SCALE GENOMIC DNA]</scope>
    <source>
        <strain>DSM 17436 / LMG 22146 / PsJN</strain>
    </source>
</reference>
<organism>
    <name type="scientific">Paraburkholderia phytofirmans (strain DSM 17436 / LMG 22146 / PsJN)</name>
    <name type="common">Burkholderia phytofirmans</name>
    <dbReference type="NCBI Taxonomy" id="398527"/>
    <lineage>
        <taxon>Bacteria</taxon>
        <taxon>Pseudomonadati</taxon>
        <taxon>Pseudomonadota</taxon>
        <taxon>Betaproteobacteria</taxon>
        <taxon>Burkholderiales</taxon>
        <taxon>Burkholderiaceae</taxon>
        <taxon>Paraburkholderia</taxon>
    </lineage>
</organism>
<name>RL1_PARPJ</name>
<sequence length="232" mass="24221">MAKLSKRLQAFAAKVDRQKLYAIDEALSLVKECASAKFDESIDVAVQLGIDAKKSDQVVRGSVVLPAGTGKSVRVAVFAQGEKAEQARAAGAEVVGMEDLAEQVKAGKLDFDIVIASPDTMRVVGTLGQILGPRGLMPNPKVGTVTPDVATAVKNAKAGQVQFRVDKAGIIHATIGRASFEPTALRSNLNALVDALQKAKPATSKGVYLRKVALSSTMGVGVRVDQASIAAQ</sequence>
<accession>B2T762</accession>